<protein>
    <recommendedName>
        <fullName evidence="1">Uracil-DNA glycosylase</fullName>
        <shortName evidence="1">UDG</shortName>
        <ecNumber evidence="1">3.2.2.27</ecNumber>
    </recommendedName>
</protein>
<gene>
    <name evidence="1" type="primary">ung</name>
    <name type="ordered locus">Asuc_0576</name>
</gene>
<feature type="chain" id="PRO_1000071495" description="Uracil-DNA glycosylase">
    <location>
        <begin position="1"/>
        <end position="222"/>
    </location>
</feature>
<feature type="active site" description="Proton acceptor" evidence="1">
    <location>
        <position position="61"/>
    </location>
</feature>
<dbReference type="EC" id="3.2.2.27" evidence="1"/>
<dbReference type="EMBL" id="CP000746">
    <property type="protein sequence ID" value="ABR73951.1"/>
    <property type="molecule type" value="Genomic_DNA"/>
</dbReference>
<dbReference type="RefSeq" id="WP_012072331.1">
    <property type="nucleotide sequence ID" value="NC_009655.1"/>
</dbReference>
<dbReference type="SMR" id="A6VLV4"/>
<dbReference type="STRING" id="339671.Asuc_0576"/>
<dbReference type="KEGG" id="asu:Asuc_0576"/>
<dbReference type="eggNOG" id="COG0692">
    <property type="taxonomic scope" value="Bacteria"/>
</dbReference>
<dbReference type="HOGENOM" id="CLU_032162_3_0_6"/>
<dbReference type="OrthoDB" id="9804372at2"/>
<dbReference type="Proteomes" id="UP000001114">
    <property type="component" value="Chromosome"/>
</dbReference>
<dbReference type="GO" id="GO:0005737">
    <property type="term" value="C:cytoplasm"/>
    <property type="evidence" value="ECO:0007669"/>
    <property type="project" value="UniProtKB-SubCell"/>
</dbReference>
<dbReference type="GO" id="GO:0004844">
    <property type="term" value="F:uracil DNA N-glycosylase activity"/>
    <property type="evidence" value="ECO:0007669"/>
    <property type="project" value="UniProtKB-UniRule"/>
</dbReference>
<dbReference type="GO" id="GO:0097510">
    <property type="term" value="P:base-excision repair, AP site formation via deaminated base removal"/>
    <property type="evidence" value="ECO:0007669"/>
    <property type="project" value="TreeGrafter"/>
</dbReference>
<dbReference type="CDD" id="cd10027">
    <property type="entry name" value="UDG-F1-like"/>
    <property type="match status" value="1"/>
</dbReference>
<dbReference type="FunFam" id="3.40.470.10:FF:000001">
    <property type="entry name" value="Uracil-DNA glycosylase"/>
    <property type="match status" value="1"/>
</dbReference>
<dbReference type="Gene3D" id="3.40.470.10">
    <property type="entry name" value="Uracil-DNA glycosylase-like domain"/>
    <property type="match status" value="1"/>
</dbReference>
<dbReference type="HAMAP" id="MF_00148">
    <property type="entry name" value="UDG"/>
    <property type="match status" value="1"/>
</dbReference>
<dbReference type="InterPro" id="IPR002043">
    <property type="entry name" value="UDG_fam1"/>
</dbReference>
<dbReference type="InterPro" id="IPR018085">
    <property type="entry name" value="Ura-DNA_Glyclase_AS"/>
</dbReference>
<dbReference type="InterPro" id="IPR005122">
    <property type="entry name" value="Uracil-DNA_glycosylase-like"/>
</dbReference>
<dbReference type="InterPro" id="IPR036895">
    <property type="entry name" value="Uracil-DNA_glycosylase-like_sf"/>
</dbReference>
<dbReference type="NCBIfam" id="NF003588">
    <property type="entry name" value="PRK05254.1-1"/>
    <property type="match status" value="1"/>
</dbReference>
<dbReference type="NCBIfam" id="NF003589">
    <property type="entry name" value="PRK05254.1-2"/>
    <property type="match status" value="1"/>
</dbReference>
<dbReference type="NCBIfam" id="NF003591">
    <property type="entry name" value="PRK05254.1-4"/>
    <property type="match status" value="1"/>
</dbReference>
<dbReference type="NCBIfam" id="NF003592">
    <property type="entry name" value="PRK05254.1-5"/>
    <property type="match status" value="1"/>
</dbReference>
<dbReference type="NCBIfam" id="TIGR00628">
    <property type="entry name" value="ung"/>
    <property type="match status" value="1"/>
</dbReference>
<dbReference type="PANTHER" id="PTHR11264">
    <property type="entry name" value="URACIL-DNA GLYCOSYLASE"/>
    <property type="match status" value="1"/>
</dbReference>
<dbReference type="PANTHER" id="PTHR11264:SF0">
    <property type="entry name" value="URACIL-DNA GLYCOSYLASE"/>
    <property type="match status" value="1"/>
</dbReference>
<dbReference type="Pfam" id="PF03167">
    <property type="entry name" value="UDG"/>
    <property type="match status" value="1"/>
</dbReference>
<dbReference type="SMART" id="SM00986">
    <property type="entry name" value="UDG"/>
    <property type="match status" value="1"/>
</dbReference>
<dbReference type="SMART" id="SM00987">
    <property type="entry name" value="UreE_C"/>
    <property type="match status" value="1"/>
</dbReference>
<dbReference type="SUPFAM" id="SSF52141">
    <property type="entry name" value="Uracil-DNA glycosylase-like"/>
    <property type="match status" value="1"/>
</dbReference>
<dbReference type="PROSITE" id="PS00130">
    <property type="entry name" value="U_DNA_GLYCOSYLASE"/>
    <property type="match status" value="1"/>
</dbReference>
<keyword id="KW-0963">Cytoplasm</keyword>
<keyword id="KW-0227">DNA damage</keyword>
<keyword id="KW-0234">DNA repair</keyword>
<keyword id="KW-0378">Hydrolase</keyword>
<keyword id="KW-1185">Reference proteome</keyword>
<organism>
    <name type="scientific">Actinobacillus succinogenes (strain ATCC 55618 / DSM 22257 / CCUG 43843 / 130Z)</name>
    <dbReference type="NCBI Taxonomy" id="339671"/>
    <lineage>
        <taxon>Bacteria</taxon>
        <taxon>Pseudomonadati</taxon>
        <taxon>Pseudomonadota</taxon>
        <taxon>Gammaproteobacteria</taxon>
        <taxon>Pasteurellales</taxon>
        <taxon>Pasteurellaceae</taxon>
        <taxon>Actinobacillus</taxon>
    </lineage>
</organism>
<name>UNG_ACTSZ</name>
<evidence type="ECO:0000255" key="1">
    <source>
        <dbReference type="HAMAP-Rule" id="MF_00148"/>
    </source>
</evidence>
<comment type="function">
    <text evidence="1">Excises uracil residues from the DNA which can arise as a result of misincorporation of dUMP residues by DNA polymerase or due to deamination of cytosine.</text>
</comment>
<comment type="catalytic activity">
    <reaction evidence="1">
        <text>Hydrolyzes single-stranded DNA or mismatched double-stranded DNA and polynucleotides, releasing free uracil.</text>
        <dbReference type="EC" id="3.2.2.27"/>
    </reaction>
</comment>
<comment type="subcellular location">
    <subcellularLocation>
        <location evidence="1">Cytoplasm</location>
    </subcellularLocation>
</comment>
<comment type="similarity">
    <text evidence="1">Belongs to the uracil-DNA glycosylase (UDG) superfamily. UNG family.</text>
</comment>
<sequence>MKTWKDVIGNEKTQPYFQHILAQVHQARASGKVVYPPQADIFNAFKLTEFDQVKVVLLGQDPYHGPNQAHGLAFSVKPPVAPPPSLMNMYKELSNEYPDFHMPNHGSLEQWAQQGVLLLNTVLTVERGQAHSHADFGWETFTDHVIHALNEQREHLVFLLWGSHAQKKGQFIDRSKHCVLTAPHPSPLSAHRGFFGCGHFTQTNDYLRRHHISEINWQLDNI</sequence>
<reference key="1">
    <citation type="journal article" date="2010" name="BMC Genomics">
        <title>A genomic perspective on the potential of Actinobacillus succinogenes for industrial succinate production.</title>
        <authorList>
            <person name="McKinlay J.B."/>
            <person name="Laivenieks M."/>
            <person name="Schindler B.D."/>
            <person name="McKinlay A.A."/>
            <person name="Siddaramappa S."/>
            <person name="Challacombe J.F."/>
            <person name="Lowry S.R."/>
            <person name="Clum A."/>
            <person name="Lapidus A.L."/>
            <person name="Burkhart K.B."/>
            <person name="Harkins V."/>
            <person name="Vieille C."/>
        </authorList>
    </citation>
    <scope>NUCLEOTIDE SEQUENCE [LARGE SCALE GENOMIC DNA]</scope>
    <source>
        <strain>ATCC 55618 / DSM 22257 / CCUG 43843 / 130Z</strain>
    </source>
</reference>
<proteinExistence type="inferred from homology"/>
<accession>A6VLV4</accession>